<accession>B4SEC9</accession>
<evidence type="ECO:0000255" key="1">
    <source>
        <dbReference type="HAMAP-Rule" id="MF_01366"/>
    </source>
</evidence>
<evidence type="ECO:0000305" key="2"/>
<name>RL13_PELPB</name>
<proteinExistence type="inferred from homology"/>
<gene>
    <name evidence="1" type="primary">rplM</name>
    <name type="ordered locus">Ppha_2355</name>
</gene>
<comment type="function">
    <text evidence="1">This protein is one of the early assembly proteins of the 50S ribosomal subunit, although it is not seen to bind rRNA by itself. It is important during the early stages of 50S assembly.</text>
</comment>
<comment type="subunit">
    <text evidence="1">Part of the 50S ribosomal subunit.</text>
</comment>
<comment type="similarity">
    <text evidence="1">Belongs to the universal ribosomal protein uL13 family.</text>
</comment>
<reference key="1">
    <citation type="submission" date="2008-06" db="EMBL/GenBank/DDBJ databases">
        <title>Complete sequence of Pelodictyon phaeoclathratiforme BU-1.</title>
        <authorList>
            <consortium name="US DOE Joint Genome Institute"/>
            <person name="Lucas S."/>
            <person name="Copeland A."/>
            <person name="Lapidus A."/>
            <person name="Glavina del Rio T."/>
            <person name="Dalin E."/>
            <person name="Tice H."/>
            <person name="Bruce D."/>
            <person name="Goodwin L."/>
            <person name="Pitluck S."/>
            <person name="Schmutz J."/>
            <person name="Larimer F."/>
            <person name="Land M."/>
            <person name="Hauser L."/>
            <person name="Kyrpides N."/>
            <person name="Mikhailova N."/>
            <person name="Liu Z."/>
            <person name="Li T."/>
            <person name="Zhao F."/>
            <person name="Overmann J."/>
            <person name="Bryant D.A."/>
            <person name="Richardson P."/>
        </authorList>
    </citation>
    <scope>NUCLEOTIDE SEQUENCE [LARGE SCALE GENOMIC DNA]</scope>
    <source>
        <strain>DSM 5477 / BU-1</strain>
    </source>
</reference>
<keyword id="KW-1185">Reference proteome</keyword>
<keyword id="KW-0687">Ribonucleoprotein</keyword>
<keyword id="KW-0689">Ribosomal protein</keyword>
<protein>
    <recommendedName>
        <fullName evidence="1">Large ribosomal subunit protein uL13</fullName>
    </recommendedName>
    <alternativeName>
        <fullName evidence="2">50S ribosomal protein L13</fullName>
    </alternativeName>
</protein>
<sequence length="149" mass="16866">MSKTLSFKTYSAKPAEVDRKWYVVDAEGQVLGRMASEIAKVLRGKHKPQFTPHIDTGDFIVVTNAEKVALTGKKEEQKSYFSHSQYPGGVKIDHVKDLLKKRPERIIENAVWGMLPHNNLGRQLFRKLKVYAGSEHPHASQAPVEMKVN</sequence>
<dbReference type="EMBL" id="CP001110">
    <property type="protein sequence ID" value="ACF44548.1"/>
    <property type="molecule type" value="Genomic_DNA"/>
</dbReference>
<dbReference type="RefSeq" id="WP_012509022.1">
    <property type="nucleotide sequence ID" value="NC_011060.1"/>
</dbReference>
<dbReference type="SMR" id="B4SEC9"/>
<dbReference type="STRING" id="324925.Ppha_2355"/>
<dbReference type="KEGG" id="pph:Ppha_2355"/>
<dbReference type="eggNOG" id="COG0102">
    <property type="taxonomic scope" value="Bacteria"/>
</dbReference>
<dbReference type="HOGENOM" id="CLU_082184_2_2_10"/>
<dbReference type="OrthoDB" id="9801330at2"/>
<dbReference type="Proteomes" id="UP000002724">
    <property type="component" value="Chromosome"/>
</dbReference>
<dbReference type="GO" id="GO:0022625">
    <property type="term" value="C:cytosolic large ribosomal subunit"/>
    <property type="evidence" value="ECO:0007669"/>
    <property type="project" value="TreeGrafter"/>
</dbReference>
<dbReference type="GO" id="GO:0003729">
    <property type="term" value="F:mRNA binding"/>
    <property type="evidence" value="ECO:0007669"/>
    <property type="project" value="TreeGrafter"/>
</dbReference>
<dbReference type="GO" id="GO:0003735">
    <property type="term" value="F:structural constituent of ribosome"/>
    <property type="evidence" value="ECO:0007669"/>
    <property type="project" value="InterPro"/>
</dbReference>
<dbReference type="GO" id="GO:0017148">
    <property type="term" value="P:negative regulation of translation"/>
    <property type="evidence" value="ECO:0007669"/>
    <property type="project" value="TreeGrafter"/>
</dbReference>
<dbReference type="GO" id="GO:0006412">
    <property type="term" value="P:translation"/>
    <property type="evidence" value="ECO:0007669"/>
    <property type="project" value="UniProtKB-UniRule"/>
</dbReference>
<dbReference type="CDD" id="cd00392">
    <property type="entry name" value="Ribosomal_L13"/>
    <property type="match status" value="1"/>
</dbReference>
<dbReference type="FunFam" id="3.90.1180.10:FF:000001">
    <property type="entry name" value="50S ribosomal protein L13"/>
    <property type="match status" value="1"/>
</dbReference>
<dbReference type="Gene3D" id="3.90.1180.10">
    <property type="entry name" value="Ribosomal protein L13"/>
    <property type="match status" value="1"/>
</dbReference>
<dbReference type="HAMAP" id="MF_01366">
    <property type="entry name" value="Ribosomal_uL13"/>
    <property type="match status" value="1"/>
</dbReference>
<dbReference type="InterPro" id="IPR005822">
    <property type="entry name" value="Ribosomal_uL13"/>
</dbReference>
<dbReference type="InterPro" id="IPR005823">
    <property type="entry name" value="Ribosomal_uL13_bac-type"/>
</dbReference>
<dbReference type="InterPro" id="IPR036899">
    <property type="entry name" value="Ribosomal_uL13_sf"/>
</dbReference>
<dbReference type="NCBIfam" id="TIGR01066">
    <property type="entry name" value="rplM_bact"/>
    <property type="match status" value="1"/>
</dbReference>
<dbReference type="PANTHER" id="PTHR11545:SF2">
    <property type="entry name" value="LARGE RIBOSOMAL SUBUNIT PROTEIN UL13M"/>
    <property type="match status" value="1"/>
</dbReference>
<dbReference type="PANTHER" id="PTHR11545">
    <property type="entry name" value="RIBOSOMAL PROTEIN L13"/>
    <property type="match status" value="1"/>
</dbReference>
<dbReference type="Pfam" id="PF00572">
    <property type="entry name" value="Ribosomal_L13"/>
    <property type="match status" value="1"/>
</dbReference>
<dbReference type="PIRSF" id="PIRSF002181">
    <property type="entry name" value="Ribosomal_L13"/>
    <property type="match status" value="1"/>
</dbReference>
<dbReference type="SUPFAM" id="SSF52161">
    <property type="entry name" value="Ribosomal protein L13"/>
    <property type="match status" value="1"/>
</dbReference>
<feature type="chain" id="PRO_1000144162" description="Large ribosomal subunit protein uL13">
    <location>
        <begin position="1"/>
        <end position="149"/>
    </location>
</feature>
<organism>
    <name type="scientific">Pelodictyon phaeoclathratiforme (strain DSM 5477 / BU-1)</name>
    <dbReference type="NCBI Taxonomy" id="324925"/>
    <lineage>
        <taxon>Bacteria</taxon>
        <taxon>Pseudomonadati</taxon>
        <taxon>Chlorobiota</taxon>
        <taxon>Chlorobiia</taxon>
        <taxon>Chlorobiales</taxon>
        <taxon>Chlorobiaceae</taxon>
        <taxon>Chlorobium/Pelodictyon group</taxon>
        <taxon>Pelodictyon</taxon>
    </lineage>
</organism>